<reference key="1">
    <citation type="journal article" date="2001" name="J. Bacteriol.">
        <title>Genome of the bacterium Streptococcus pneumoniae strain R6.</title>
        <authorList>
            <person name="Hoskins J."/>
            <person name="Alborn W.E. Jr."/>
            <person name="Arnold J."/>
            <person name="Blaszczak L.C."/>
            <person name="Burgett S."/>
            <person name="DeHoff B.S."/>
            <person name="Estrem S.T."/>
            <person name="Fritz L."/>
            <person name="Fu D.-J."/>
            <person name="Fuller W."/>
            <person name="Geringer C."/>
            <person name="Gilmour R."/>
            <person name="Glass J.S."/>
            <person name="Khoja H."/>
            <person name="Kraft A.R."/>
            <person name="Lagace R.E."/>
            <person name="LeBlanc D.J."/>
            <person name="Lee L.N."/>
            <person name="Lefkowitz E.J."/>
            <person name="Lu J."/>
            <person name="Matsushima P."/>
            <person name="McAhren S.M."/>
            <person name="McHenney M."/>
            <person name="McLeaster K."/>
            <person name="Mundy C.W."/>
            <person name="Nicas T.I."/>
            <person name="Norris F.H."/>
            <person name="O'Gara M."/>
            <person name="Peery R.B."/>
            <person name="Robertson G.T."/>
            <person name="Rockey P."/>
            <person name="Sun P.-M."/>
            <person name="Winkler M.E."/>
            <person name="Yang Y."/>
            <person name="Young-Bellido M."/>
            <person name="Zhao G."/>
            <person name="Zook C.A."/>
            <person name="Baltz R.H."/>
            <person name="Jaskunas S.R."/>
            <person name="Rosteck P.R. Jr."/>
            <person name="Skatrud P.L."/>
            <person name="Glass J.I."/>
        </authorList>
    </citation>
    <scope>NUCLEOTIDE SEQUENCE [LARGE SCALE GENOMIC DNA]</scope>
    <source>
        <strain>ATCC BAA-255 / R6</strain>
    </source>
</reference>
<name>ADDB_STRR6</name>
<evidence type="ECO:0000255" key="1">
    <source>
        <dbReference type="HAMAP-Rule" id="MF_01453"/>
    </source>
</evidence>
<protein>
    <recommendedName>
        <fullName evidence="1">ATP-dependent helicase/deoxyribonuclease subunit B</fullName>
        <ecNumber evidence="1">3.1.-.-</ecNumber>
    </recommendedName>
    <alternativeName>
        <fullName evidence="1">ATP-dependent helicase/nuclease subunit RexB</fullName>
    </alternativeName>
</protein>
<accession>Q8DPR7</accession>
<sequence length="1091" mass="124854">MKLLYTDIRTSLTEILTREAEELVAAGKRVFYIAPNSLSFEKERAVLEYLSQQASFSITVTRFAQMARYLVLNDLPAKTTLDDIGLGLAFYKCLAELDPKDLRVYGAIKQDPQLIQQLIELYHEMTKSQMSFLDLENLTDEDKRADLLLIFEKVTAYLNQGQLAQESQLSHLIEAIENDKVSSDFNQIALVIDGFTRFSAEEERVVDLLHGKGVEIVIGAYASKKAYTSPFSEGNLYQASVKFLHHLASKYQTPAQDCSQTHEKMDSFDKASRLLESSYDFSELALDVDEKDRENLQIWSCLTQKEELELVARSIRQKLHENSDLSYKHFRILLGDVASYQLSLKTIFDQYQIPFYLGRSEAMAHHPLTQFVESILALKRYRFRQEDLINLLRTDLYTDLSQSDIDAFEQYIRYLGINGLPAFQQTFTKSHHGKFNLERLNVLRLRILAPLETLFASRKQKAEKLLQKWSVFLKEGAVTKQLQDLTTTLEAVEQERQAEVWKAFCHVLEQFATVFAGSQVSLEDFLALLHSGMSLSQYRTIPATVDTVLVQSYDLIAPLTADFVYAIGLTQDNLPKISQNTSLLTDEERQNLNQATEEGVQLLIASSENLKKNRYTMLSLVNSARKQLFLSAPSLFNESESKESAYLQELIHFGFRRREKRMNHKGLSKEDMGSYHSLLSSLVAYHQQGEMSDTEQDLTFVKVLSRVIGKKLDQQGLENPAIPTSPSSKTLAKDTLQALYPAKQEFYLSTSGLTEFYRNEYSYFLRYVLGLQEELRLHPDARSHGNFLHRIFERALQLPNEDSFDQRLEQAIQETSQEREFEAIYQESLEAQFTKEVLLDVARTTGHILRHNPAIETIKEEANFGGKDQAFIQLDNGRSVFVRGKVDRIDRLKANGAIGVVDYKSSLTQFQFPHFFNGLNSQLPTYLAALKREGEQNFFGAMYLEMAEPVQSLMAVKSLAGAVVEASKSMKYQGLFLEKESSYLGEFYNKNKANQLTDEEFQLLLDYNAYLYKKAAEKILAGRFAINPYTENGRSIAPYVQQHQAITGFEANYHLGQARFLEKLDLADGKRLVGEKLKQAWLEKIREELNR</sequence>
<proteinExistence type="inferred from homology"/>
<feature type="chain" id="PRO_0000379396" description="ATP-dependent helicase/deoxyribonuclease subunit B">
    <location>
        <begin position="1"/>
        <end position="1091"/>
    </location>
</feature>
<dbReference type="EC" id="3.1.-.-" evidence="1"/>
<dbReference type="EMBL" id="AE007317">
    <property type="protein sequence ID" value="AAK99843.1"/>
    <property type="molecule type" value="Genomic_DNA"/>
</dbReference>
<dbReference type="PIR" id="C95133">
    <property type="entry name" value="C95133"/>
</dbReference>
<dbReference type="PIR" id="G98001">
    <property type="entry name" value="G98001"/>
</dbReference>
<dbReference type="RefSeq" id="NP_358633.1">
    <property type="nucleotide sequence ID" value="NC_003098.1"/>
</dbReference>
<dbReference type="RefSeq" id="WP_000772372.1">
    <property type="nucleotide sequence ID" value="NC_003098.1"/>
</dbReference>
<dbReference type="SMR" id="Q8DPR7"/>
<dbReference type="STRING" id="171101.spr1039"/>
<dbReference type="KEGG" id="spr:spr1039"/>
<dbReference type="PATRIC" id="fig|171101.6.peg.1128"/>
<dbReference type="eggNOG" id="COG3857">
    <property type="taxonomic scope" value="Bacteria"/>
</dbReference>
<dbReference type="HOGENOM" id="CLU_007838_0_0_9"/>
<dbReference type="Proteomes" id="UP000000586">
    <property type="component" value="Chromosome"/>
</dbReference>
<dbReference type="GO" id="GO:0008409">
    <property type="term" value="F:5'-3' exonuclease activity"/>
    <property type="evidence" value="ECO:0007669"/>
    <property type="project" value="UniProtKB-UniRule"/>
</dbReference>
<dbReference type="GO" id="GO:0005524">
    <property type="term" value="F:ATP binding"/>
    <property type="evidence" value="ECO:0007669"/>
    <property type="project" value="UniProtKB-UniRule"/>
</dbReference>
<dbReference type="GO" id="GO:0003690">
    <property type="term" value="F:double-stranded DNA binding"/>
    <property type="evidence" value="ECO:0007669"/>
    <property type="project" value="UniProtKB-UniRule"/>
</dbReference>
<dbReference type="GO" id="GO:0004386">
    <property type="term" value="F:helicase activity"/>
    <property type="evidence" value="ECO:0007669"/>
    <property type="project" value="UniProtKB-KW"/>
</dbReference>
<dbReference type="GO" id="GO:0016817">
    <property type="term" value="F:hydrolase activity, acting on acid anhydrides"/>
    <property type="evidence" value="ECO:0007669"/>
    <property type="project" value="InterPro"/>
</dbReference>
<dbReference type="GO" id="GO:0006310">
    <property type="term" value="P:DNA recombination"/>
    <property type="evidence" value="ECO:0000318"/>
    <property type="project" value="GO_Central"/>
</dbReference>
<dbReference type="GO" id="GO:0000724">
    <property type="term" value="P:double-strand break repair via homologous recombination"/>
    <property type="evidence" value="ECO:0007669"/>
    <property type="project" value="UniProtKB-UniRule"/>
</dbReference>
<dbReference type="FunFam" id="3.40.50.300:FF:002666">
    <property type="entry name" value="ATP-dependent helicase/deoxyribonuclease subunit B"/>
    <property type="match status" value="1"/>
</dbReference>
<dbReference type="FunFam" id="3.40.50.300:FF:002815">
    <property type="entry name" value="ATP-dependent helicase/deoxyribonuclease subunit B"/>
    <property type="match status" value="1"/>
</dbReference>
<dbReference type="Gene3D" id="3.40.50.300">
    <property type="entry name" value="P-loop containing nucleotide triphosphate hydrolases"/>
    <property type="match status" value="4"/>
</dbReference>
<dbReference type="HAMAP" id="MF_01453">
    <property type="entry name" value="AddB_type2"/>
    <property type="match status" value="1"/>
</dbReference>
<dbReference type="InterPro" id="IPR049035">
    <property type="entry name" value="ADDB_N"/>
</dbReference>
<dbReference type="InterPro" id="IPR014141">
    <property type="entry name" value="DNA_helicase_suRexB"/>
</dbReference>
<dbReference type="InterPro" id="IPR027417">
    <property type="entry name" value="P-loop_NTPase"/>
</dbReference>
<dbReference type="InterPro" id="IPR038726">
    <property type="entry name" value="PDDEXK_AddAB-type"/>
</dbReference>
<dbReference type="InterPro" id="IPR011335">
    <property type="entry name" value="Restrct_endonuc-II-like"/>
</dbReference>
<dbReference type="NCBIfam" id="TIGR02774">
    <property type="entry name" value="rexB_recomb"/>
    <property type="match status" value="1"/>
</dbReference>
<dbReference type="PANTHER" id="PTHR30591">
    <property type="entry name" value="RECBCD ENZYME SUBUNIT RECC"/>
    <property type="match status" value="1"/>
</dbReference>
<dbReference type="PANTHER" id="PTHR30591:SF1">
    <property type="entry name" value="RECBCD ENZYME SUBUNIT RECC"/>
    <property type="match status" value="1"/>
</dbReference>
<dbReference type="Pfam" id="PF21445">
    <property type="entry name" value="ADDB_N"/>
    <property type="match status" value="1"/>
</dbReference>
<dbReference type="Pfam" id="PF12705">
    <property type="entry name" value="PDDEXK_1"/>
    <property type="match status" value="1"/>
</dbReference>
<dbReference type="SUPFAM" id="SSF52540">
    <property type="entry name" value="P-loop containing nucleoside triphosphate hydrolases"/>
    <property type="match status" value="1"/>
</dbReference>
<dbReference type="SUPFAM" id="SSF52980">
    <property type="entry name" value="Restriction endonuclease-like"/>
    <property type="match status" value="1"/>
</dbReference>
<organism>
    <name type="scientific">Streptococcus pneumoniae (strain ATCC BAA-255 / R6)</name>
    <dbReference type="NCBI Taxonomy" id="171101"/>
    <lineage>
        <taxon>Bacteria</taxon>
        <taxon>Bacillati</taxon>
        <taxon>Bacillota</taxon>
        <taxon>Bacilli</taxon>
        <taxon>Lactobacillales</taxon>
        <taxon>Streptococcaceae</taxon>
        <taxon>Streptococcus</taxon>
    </lineage>
</organism>
<comment type="function">
    <text evidence="1">The heterodimer acts as both an ATP-dependent DNA helicase and an ATP-dependent, dual-direction single-stranded exonuclease. Recognizes the chi site generating a DNA molecule suitable for the initiation of homologous recombination. This subunit has 5' -&gt; 3' nuclease activity but not helicase activity.</text>
</comment>
<comment type="cofactor">
    <cofactor evidence="1">
        <name>Mg(2+)</name>
        <dbReference type="ChEBI" id="CHEBI:18420"/>
    </cofactor>
</comment>
<comment type="subunit">
    <text evidence="1">Heterodimer of AddA and RexB.</text>
</comment>
<comment type="miscellaneous">
    <text evidence="1">Despite having helicase-like domains, this subunit does not have helicase activity.</text>
</comment>
<comment type="similarity">
    <text evidence="1">Belongs to the helicase family. AddB/RexB type 2 subfamily.</text>
</comment>
<gene>
    <name evidence="1" type="primary">rexB</name>
    <name type="ordered locus">spr1039</name>
</gene>
<keyword id="KW-0067">ATP-binding</keyword>
<keyword id="KW-0227">DNA damage</keyword>
<keyword id="KW-0234">DNA repair</keyword>
<keyword id="KW-0238">DNA-binding</keyword>
<keyword id="KW-0269">Exonuclease</keyword>
<keyword id="KW-0347">Helicase</keyword>
<keyword id="KW-0378">Hydrolase</keyword>
<keyword id="KW-0540">Nuclease</keyword>
<keyword id="KW-0547">Nucleotide-binding</keyword>
<keyword id="KW-1185">Reference proteome</keyword>